<keyword id="KW-1003">Cell membrane</keyword>
<keyword id="KW-0472">Membrane</keyword>
<keyword id="KW-0520">NAD</keyword>
<keyword id="KW-0874">Quinone</keyword>
<keyword id="KW-1185">Reference proteome</keyword>
<keyword id="KW-1278">Translocase</keyword>
<keyword id="KW-0813">Transport</keyword>
<reference key="1">
    <citation type="journal article" date="2003" name="Nature">
        <title>The genome sequence of Bacillus anthracis Ames and comparison to closely related bacteria.</title>
        <authorList>
            <person name="Read T.D."/>
            <person name="Peterson S.N."/>
            <person name="Tourasse N.J."/>
            <person name="Baillie L.W."/>
            <person name="Paulsen I.T."/>
            <person name="Nelson K.E."/>
            <person name="Tettelin H."/>
            <person name="Fouts D.E."/>
            <person name="Eisen J.A."/>
            <person name="Gill S.R."/>
            <person name="Holtzapple E.K."/>
            <person name="Okstad O.A."/>
            <person name="Helgason E."/>
            <person name="Rilstone J."/>
            <person name="Wu M."/>
            <person name="Kolonay J.F."/>
            <person name="Beanan M.J."/>
            <person name="Dodson R.J."/>
            <person name="Brinkac L.M."/>
            <person name="Gwinn M.L."/>
            <person name="DeBoy R.T."/>
            <person name="Madpu R."/>
            <person name="Daugherty S.C."/>
            <person name="Durkin A.S."/>
            <person name="Haft D.H."/>
            <person name="Nelson W.C."/>
            <person name="Peterson J.D."/>
            <person name="Pop M."/>
            <person name="Khouri H.M."/>
            <person name="Radune D."/>
            <person name="Benton J.L."/>
            <person name="Mahamoud Y."/>
            <person name="Jiang L."/>
            <person name="Hance I.R."/>
            <person name="Weidman J.F."/>
            <person name="Berry K.J."/>
            <person name="Plaut R.D."/>
            <person name="Wolf A.M."/>
            <person name="Watkins K.L."/>
            <person name="Nierman W.C."/>
            <person name="Hazen A."/>
            <person name="Cline R.T."/>
            <person name="Redmond C."/>
            <person name="Thwaite J.E."/>
            <person name="White O."/>
            <person name="Salzberg S.L."/>
            <person name="Thomason B."/>
            <person name="Friedlander A.M."/>
            <person name="Koehler T.M."/>
            <person name="Hanna P.C."/>
            <person name="Kolstoe A.-B."/>
            <person name="Fraser C.M."/>
        </authorList>
    </citation>
    <scope>NUCLEOTIDE SEQUENCE [LARGE SCALE GENOMIC DNA]</scope>
    <source>
        <strain>Ames / isolate Porton</strain>
    </source>
</reference>
<reference key="2">
    <citation type="submission" date="2004-01" db="EMBL/GenBank/DDBJ databases">
        <title>Complete genome sequence of Bacillus anthracis Sterne.</title>
        <authorList>
            <person name="Brettin T.S."/>
            <person name="Bruce D."/>
            <person name="Challacombe J.F."/>
            <person name="Gilna P."/>
            <person name="Han C."/>
            <person name="Hill K."/>
            <person name="Hitchcock P."/>
            <person name="Jackson P."/>
            <person name="Keim P."/>
            <person name="Longmire J."/>
            <person name="Lucas S."/>
            <person name="Okinaka R."/>
            <person name="Richardson P."/>
            <person name="Rubin E."/>
            <person name="Tice H."/>
        </authorList>
    </citation>
    <scope>NUCLEOTIDE SEQUENCE [LARGE SCALE GENOMIC DNA]</scope>
    <source>
        <strain>Sterne</strain>
    </source>
</reference>
<reference key="3">
    <citation type="journal article" date="2009" name="J. Bacteriol.">
        <title>The complete genome sequence of Bacillus anthracis Ames 'Ancestor'.</title>
        <authorList>
            <person name="Ravel J."/>
            <person name="Jiang L."/>
            <person name="Stanley S.T."/>
            <person name="Wilson M.R."/>
            <person name="Decker R.S."/>
            <person name="Read T.D."/>
            <person name="Worsham P."/>
            <person name="Keim P.S."/>
            <person name="Salzberg S.L."/>
            <person name="Fraser-Liggett C.M."/>
            <person name="Rasko D.A."/>
        </authorList>
    </citation>
    <scope>NUCLEOTIDE SEQUENCE [LARGE SCALE GENOMIC DNA]</scope>
    <source>
        <strain>Ames ancestor</strain>
    </source>
</reference>
<protein>
    <recommendedName>
        <fullName evidence="1">NADH-quinone oxidoreductase subunit D</fullName>
        <ecNumber evidence="1">7.1.1.-</ecNumber>
    </recommendedName>
    <alternativeName>
        <fullName evidence="1">NADH dehydrogenase I subunit D</fullName>
    </alternativeName>
    <alternativeName>
        <fullName evidence="1">NDH-1 subunit D</fullName>
    </alternativeName>
</protein>
<name>NUOD_BACAN</name>
<dbReference type="EC" id="7.1.1.-" evidence="1"/>
<dbReference type="EMBL" id="AE016879">
    <property type="protein sequence ID" value="AAP29183.1"/>
    <property type="molecule type" value="Genomic_DNA"/>
</dbReference>
<dbReference type="EMBL" id="AE017334">
    <property type="protein sequence ID" value="AAT34682.1"/>
    <property type="molecule type" value="Genomic_DNA"/>
</dbReference>
<dbReference type="EMBL" id="AE017225">
    <property type="protein sequence ID" value="AAT57436.1"/>
    <property type="molecule type" value="Genomic_DNA"/>
</dbReference>
<dbReference type="RefSeq" id="NP_847697.1">
    <property type="nucleotide sequence ID" value="NC_003997.3"/>
</dbReference>
<dbReference type="RefSeq" id="WP_000621456.1">
    <property type="nucleotide sequence ID" value="NZ_WXXJ01000038.1"/>
</dbReference>
<dbReference type="RefSeq" id="YP_031386.1">
    <property type="nucleotide sequence ID" value="NC_005945.1"/>
</dbReference>
<dbReference type="SMR" id="Q81K03"/>
<dbReference type="STRING" id="261594.GBAA_5539"/>
<dbReference type="DNASU" id="1085214"/>
<dbReference type="GeneID" id="45025127"/>
<dbReference type="KEGG" id="ban:BA_5539"/>
<dbReference type="KEGG" id="banh:HYU01_27050"/>
<dbReference type="KEGG" id="bar:GBAA_5539"/>
<dbReference type="KEGG" id="bat:BAS5147"/>
<dbReference type="PATRIC" id="fig|198094.11.peg.5499"/>
<dbReference type="eggNOG" id="COG0649">
    <property type="taxonomic scope" value="Bacteria"/>
</dbReference>
<dbReference type="HOGENOM" id="CLU_015134_1_2_9"/>
<dbReference type="OMA" id="TRMDYLT"/>
<dbReference type="OrthoDB" id="9801496at2"/>
<dbReference type="Proteomes" id="UP000000427">
    <property type="component" value="Chromosome"/>
</dbReference>
<dbReference type="Proteomes" id="UP000000594">
    <property type="component" value="Chromosome"/>
</dbReference>
<dbReference type="GO" id="GO:0005886">
    <property type="term" value="C:plasma membrane"/>
    <property type="evidence" value="ECO:0007669"/>
    <property type="project" value="UniProtKB-SubCell"/>
</dbReference>
<dbReference type="GO" id="GO:0051287">
    <property type="term" value="F:NAD binding"/>
    <property type="evidence" value="ECO:0007669"/>
    <property type="project" value="InterPro"/>
</dbReference>
<dbReference type="GO" id="GO:0050136">
    <property type="term" value="F:NADH:ubiquinone reductase (non-electrogenic) activity"/>
    <property type="evidence" value="ECO:0007669"/>
    <property type="project" value="UniProtKB-UniRule"/>
</dbReference>
<dbReference type="GO" id="GO:0048038">
    <property type="term" value="F:quinone binding"/>
    <property type="evidence" value="ECO:0007669"/>
    <property type="project" value="UniProtKB-KW"/>
</dbReference>
<dbReference type="FunFam" id="1.10.645.10:FF:000006">
    <property type="entry name" value="NADH-quinone oxidoreductase subunit D"/>
    <property type="match status" value="1"/>
</dbReference>
<dbReference type="Gene3D" id="1.10.645.10">
    <property type="entry name" value="Cytochrome-c3 Hydrogenase, chain B"/>
    <property type="match status" value="1"/>
</dbReference>
<dbReference type="HAMAP" id="MF_01358">
    <property type="entry name" value="NDH1_NuoD"/>
    <property type="match status" value="1"/>
</dbReference>
<dbReference type="InterPro" id="IPR001135">
    <property type="entry name" value="NADH_Q_OxRdtase_suD"/>
</dbReference>
<dbReference type="InterPro" id="IPR022885">
    <property type="entry name" value="NDH1_su_D/H"/>
</dbReference>
<dbReference type="InterPro" id="IPR029014">
    <property type="entry name" value="NiFe-Hase_large"/>
</dbReference>
<dbReference type="NCBIfam" id="NF004739">
    <property type="entry name" value="PRK06075.1"/>
    <property type="match status" value="1"/>
</dbReference>
<dbReference type="NCBIfam" id="NF008974">
    <property type="entry name" value="PRK12322.1"/>
    <property type="match status" value="1"/>
</dbReference>
<dbReference type="PANTHER" id="PTHR11993:SF10">
    <property type="entry name" value="NADH DEHYDROGENASE [UBIQUINONE] IRON-SULFUR PROTEIN 2, MITOCHONDRIAL"/>
    <property type="match status" value="1"/>
</dbReference>
<dbReference type="PANTHER" id="PTHR11993">
    <property type="entry name" value="NADH-UBIQUINONE OXIDOREDUCTASE 49 KDA SUBUNIT"/>
    <property type="match status" value="1"/>
</dbReference>
<dbReference type="Pfam" id="PF00346">
    <property type="entry name" value="Complex1_49kDa"/>
    <property type="match status" value="2"/>
</dbReference>
<dbReference type="SUPFAM" id="SSF56762">
    <property type="entry name" value="HydB/Nqo4-like"/>
    <property type="match status" value="1"/>
</dbReference>
<accession>Q81K03</accession>
<accession>Q6HQK2</accession>
<accession>Q6KJX7</accession>
<proteinExistence type="inferred from homology"/>
<evidence type="ECO:0000255" key="1">
    <source>
        <dbReference type="HAMAP-Rule" id="MF_01358"/>
    </source>
</evidence>
<comment type="function">
    <text evidence="1">NDH-1 shuttles electrons from NADH, via FMN and iron-sulfur (Fe-S) centers, to quinones in the respiratory chain. The immediate electron acceptor for the enzyme in this species is believed to be a menaquinone. Couples the redox reaction to proton translocation (for every two electrons transferred, four hydrogen ions are translocated across the cytoplasmic membrane), and thus conserves the redox energy in a proton gradient.</text>
</comment>
<comment type="catalytic activity">
    <reaction evidence="1">
        <text>a quinone + NADH + 5 H(+)(in) = a quinol + NAD(+) + 4 H(+)(out)</text>
        <dbReference type="Rhea" id="RHEA:57888"/>
        <dbReference type="ChEBI" id="CHEBI:15378"/>
        <dbReference type="ChEBI" id="CHEBI:24646"/>
        <dbReference type="ChEBI" id="CHEBI:57540"/>
        <dbReference type="ChEBI" id="CHEBI:57945"/>
        <dbReference type="ChEBI" id="CHEBI:132124"/>
    </reaction>
</comment>
<comment type="subunit">
    <text evidence="1">NDH-1 is composed of 14 different subunits. Subunits NuoB, C, D, E, F, and G constitute the peripheral sector of the complex.</text>
</comment>
<comment type="subcellular location">
    <subcellularLocation>
        <location evidence="1">Cell membrane</location>
        <topology evidence="1">Peripheral membrane protein</topology>
        <orientation evidence="1">Cytoplasmic side</orientation>
    </subcellularLocation>
</comment>
<comment type="similarity">
    <text evidence="1">Belongs to the complex I 49 kDa subunit family.</text>
</comment>
<organism>
    <name type="scientific">Bacillus anthracis</name>
    <dbReference type="NCBI Taxonomy" id="1392"/>
    <lineage>
        <taxon>Bacteria</taxon>
        <taxon>Bacillati</taxon>
        <taxon>Bacillota</taxon>
        <taxon>Bacilli</taxon>
        <taxon>Bacillales</taxon>
        <taxon>Bacillaceae</taxon>
        <taxon>Bacillus</taxon>
        <taxon>Bacillus cereus group</taxon>
    </lineage>
</organism>
<gene>
    <name evidence="1" type="primary">nuoD</name>
    <name type="ordered locus">BA_5539</name>
    <name type="ordered locus">GBAA_5539</name>
    <name type="ordered locus">BAS5147</name>
</gene>
<sequence>MIRTEEMLLNVGPQHPSTHGVFRLVIKIDGEIIKEATPVIGYLHRGTEKIAESLQYTQIIPYTDRMDYLSAMTNNYVICHAVETMMGLEIPERAEYLRVLAMELGRIASHLVWWGTNLLDIGAVSPFLYAFREREMIINLLNELCGARLTFNYMRVGGVKWDAPDGWIEKVKEFVPYMREQLAGYHDLVSGNEIFLNRVKGVGIYSAEEAISYSLSGANLRCTGVNWDLRKDEPYSIYDRFDFDIPVGSVGDAWDRYVCRMQEIEESLKIVEQAVQQFPKEGAVLAKVPKIIKAPKGEAFVRIESPRGEIGCYIASDGKKEPYRLKFRRPSFYNLQILPKLLKGENIANLITILGGVDIVLGEVDG</sequence>
<feature type="chain" id="PRO_0000357763" description="NADH-quinone oxidoreductase subunit D">
    <location>
        <begin position="1"/>
        <end position="366"/>
    </location>
</feature>